<protein>
    <recommendedName>
        <fullName>Flagellar motor switch protein FliG</fullName>
    </recommendedName>
</protein>
<evidence type="ECO:0000250" key="1"/>
<evidence type="ECO:0000305" key="2"/>
<evidence type="ECO:0007829" key="3">
    <source>
        <dbReference type="PDB" id="3HJL"/>
    </source>
</evidence>
<accession>O66891</accession>
<name>FLIG_AQUAE</name>
<proteinExistence type="evidence at protein level"/>
<comment type="function">
    <text evidence="1">FliG is one of 2 proteins (FliG, FliN) that might form the rotor-mounted switch complex (C ring), located at the base of the basal body. This complex interacts with the CheY and CheZ chemotaxis proteins, in addition to contacting components of the motor that determine the direction of flagellar rotation (By similarity).</text>
</comment>
<comment type="subcellular location">
    <subcellularLocation>
        <location evidence="1">Cell inner membrane</location>
        <topology evidence="1">Peripheral membrane protein</topology>
        <orientation evidence="1">Cytoplasmic side</orientation>
    </subcellularLocation>
    <subcellularLocation>
        <location evidence="1">Bacterial flagellum basal body</location>
    </subcellularLocation>
</comment>
<comment type="similarity">
    <text evidence="2">Belongs to the FliG family.</text>
</comment>
<reference key="1">
    <citation type="journal article" date="1998" name="Nature">
        <title>The complete genome of the hyperthermophilic bacterium Aquifex aeolicus.</title>
        <authorList>
            <person name="Deckert G."/>
            <person name="Warren P.V."/>
            <person name="Gaasterland T."/>
            <person name="Young W.G."/>
            <person name="Lenox A.L."/>
            <person name="Graham D.E."/>
            <person name="Overbeek R."/>
            <person name="Snead M.A."/>
            <person name="Keller M."/>
            <person name="Aujay M."/>
            <person name="Huber R."/>
            <person name="Feldman R.A."/>
            <person name="Short J.M."/>
            <person name="Olsen G.J."/>
            <person name="Swanson R.V."/>
        </authorList>
    </citation>
    <scope>NUCLEOTIDE SEQUENCE [LARGE SCALE GENOMIC DNA]</scope>
    <source>
        <strain>VF5</strain>
    </source>
</reference>
<reference key="2">
    <citation type="journal article" date="2010" name="Nature">
        <title>Structure of the torque ring of the flagellar motor and the molecular basis for rotational switching.</title>
        <authorList>
            <person name="Lee L.K."/>
            <person name="Ginsburg M.A."/>
            <person name="Crovace C."/>
            <person name="Donohoe M."/>
            <person name="Stock D."/>
        </authorList>
    </citation>
    <scope>X-RAY CRYSTALLOGRAPHY (2.40 ANGSTROMS)</scope>
</reference>
<sequence>MAQEKSALSKAQKAAVLLLSLPEEVSMNIVKELSEEELQKLFALAKDLESVPEEEIENIAEELLDEIKKAGIKIKKPEEFIENIKKVIPPTLAEKFRGILELGDAEKILKEIEKVDSRILASLLKNEHPQTIALFLSQLSPKKSAEIIQNLPEELKKEVVKRIATLENVNVQYVKELAQILLEEISSLGAKEALKLEGTAVAAELLNTLDKETRELILQSIGQEDPLLEERIREKMFTFEDIRKLSDRDIIEILKVVDKNTLMIALLGAPEDIKQKFLSNMSKRAAKLFLEDMEALGPVKKSEIEKAQRQVVNIIRKMIDEGKIEIGD</sequence>
<dbReference type="EMBL" id="AE000657">
    <property type="protein sequence ID" value="AAC06845.1"/>
    <property type="molecule type" value="Genomic_DNA"/>
</dbReference>
<dbReference type="PIR" id="G70357">
    <property type="entry name" value="G70357"/>
</dbReference>
<dbReference type="RefSeq" id="NP_213451.1">
    <property type="nucleotide sequence ID" value="NC_000918.1"/>
</dbReference>
<dbReference type="RefSeq" id="WP_010880389.1">
    <property type="nucleotide sequence ID" value="NC_000918.1"/>
</dbReference>
<dbReference type="PDB" id="3HJL">
    <property type="method" value="X-ray"/>
    <property type="resolution" value="2.40 A"/>
    <property type="chains" value="A=1-328"/>
</dbReference>
<dbReference type="PDBsum" id="3HJL"/>
<dbReference type="SMR" id="O66891"/>
<dbReference type="FunCoup" id="O66891">
    <property type="interactions" value="48"/>
</dbReference>
<dbReference type="STRING" id="224324.aq_653"/>
<dbReference type="EnsemblBacteria" id="AAC06845">
    <property type="protein sequence ID" value="AAC06845"/>
    <property type="gene ID" value="aq_653"/>
</dbReference>
<dbReference type="KEGG" id="aae:aq_653"/>
<dbReference type="PATRIC" id="fig|224324.8.peg.532"/>
<dbReference type="eggNOG" id="COG1536">
    <property type="taxonomic scope" value="Bacteria"/>
</dbReference>
<dbReference type="HOGENOM" id="CLU_047835_1_1_0"/>
<dbReference type="InParanoid" id="O66891"/>
<dbReference type="OrthoDB" id="9780302at2"/>
<dbReference type="EvolutionaryTrace" id="O66891"/>
<dbReference type="Proteomes" id="UP000000798">
    <property type="component" value="Chromosome"/>
</dbReference>
<dbReference type="GO" id="GO:0009425">
    <property type="term" value="C:bacterial-type flagellum basal body"/>
    <property type="evidence" value="ECO:0007669"/>
    <property type="project" value="UniProtKB-SubCell"/>
</dbReference>
<dbReference type="GO" id="GO:0005886">
    <property type="term" value="C:plasma membrane"/>
    <property type="evidence" value="ECO:0007669"/>
    <property type="project" value="UniProtKB-SubCell"/>
</dbReference>
<dbReference type="GO" id="GO:0003774">
    <property type="term" value="F:cytoskeletal motor activity"/>
    <property type="evidence" value="ECO:0007669"/>
    <property type="project" value="InterPro"/>
</dbReference>
<dbReference type="GO" id="GO:0071973">
    <property type="term" value="P:bacterial-type flagellum-dependent cell motility"/>
    <property type="evidence" value="ECO:0000318"/>
    <property type="project" value="GO_Central"/>
</dbReference>
<dbReference type="GO" id="GO:0006935">
    <property type="term" value="P:chemotaxis"/>
    <property type="evidence" value="ECO:0007669"/>
    <property type="project" value="UniProtKB-KW"/>
</dbReference>
<dbReference type="FunFam" id="1.10.220.30:FF:000034">
    <property type="entry name" value="Flagellar motor switch protein FliG"/>
    <property type="match status" value="1"/>
</dbReference>
<dbReference type="Gene3D" id="1.10.220.30">
    <property type="match status" value="3"/>
</dbReference>
<dbReference type="Gene3D" id="1.20.5.2020">
    <property type="match status" value="1"/>
</dbReference>
<dbReference type="InterPro" id="IPR001810">
    <property type="entry name" value="F-box_dom"/>
</dbReference>
<dbReference type="InterPro" id="IPR000090">
    <property type="entry name" value="Flg_Motor_Flig"/>
</dbReference>
<dbReference type="InterPro" id="IPR023087">
    <property type="entry name" value="Flg_Motor_Flig_C"/>
</dbReference>
<dbReference type="InterPro" id="IPR011002">
    <property type="entry name" value="FliG_a-hlx"/>
</dbReference>
<dbReference type="InterPro" id="IPR032779">
    <property type="entry name" value="FliG_M"/>
</dbReference>
<dbReference type="InterPro" id="IPR028263">
    <property type="entry name" value="FliG_N"/>
</dbReference>
<dbReference type="NCBIfam" id="TIGR00207">
    <property type="entry name" value="fliG"/>
    <property type="match status" value="1"/>
</dbReference>
<dbReference type="PANTHER" id="PTHR30534">
    <property type="entry name" value="FLAGELLAR MOTOR SWITCH PROTEIN FLIG"/>
    <property type="match status" value="1"/>
</dbReference>
<dbReference type="PANTHER" id="PTHR30534:SF0">
    <property type="entry name" value="FLAGELLAR MOTOR SWITCH PROTEIN FLIG"/>
    <property type="match status" value="1"/>
</dbReference>
<dbReference type="Pfam" id="PF01706">
    <property type="entry name" value="FliG_C"/>
    <property type="match status" value="1"/>
</dbReference>
<dbReference type="Pfam" id="PF14841">
    <property type="entry name" value="FliG_M"/>
    <property type="match status" value="1"/>
</dbReference>
<dbReference type="Pfam" id="PF14842">
    <property type="entry name" value="FliG_N"/>
    <property type="match status" value="1"/>
</dbReference>
<dbReference type="PIRSF" id="PIRSF003161">
    <property type="entry name" value="FliG"/>
    <property type="match status" value="1"/>
</dbReference>
<dbReference type="PRINTS" id="PR00954">
    <property type="entry name" value="FLGMOTORFLIG"/>
</dbReference>
<dbReference type="SUPFAM" id="SSF48029">
    <property type="entry name" value="FliG"/>
    <property type="match status" value="2"/>
</dbReference>
<organism>
    <name type="scientific">Aquifex aeolicus (strain VF5)</name>
    <dbReference type="NCBI Taxonomy" id="224324"/>
    <lineage>
        <taxon>Bacteria</taxon>
        <taxon>Pseudomonadati</taxon>
        <taxon>Aquificota</taxon>
        <taxon>Aquificia</taxon>
        <taxon>Aquificales</taxon>
        <taxon>Aquificaceae</taxon>
        <taxon>Aquifex</taxon>
    </lineage>
</organism>
<feature type="chain" id="PRO_0000184081" description="Flagellar motor switch protein FliG">
    <location>
        <begin position="1"/>
        <end position="328"/>
    </location>
</feature>
<feature type="short sequence motif" description="Part of the EHPQR-motif">
    <location>
        <begin position="127"/>
        <end position="130"/>
    </location>
</feature>
<feature type="site" description="Part of the EHPQR-motif">
    <location>
        <position position="162"/>
    </location>
</feature>
<feature type="helix" evidence="3">
    <location>
        <begin position="6"/>
        <end position="20"/>
    </location>
</feature>
<feature type="helix" evidence="3">
    <location>
        <begin position="23"/>
        <end position="32"/>
    </location>
</feature>
<feature type="helix" evidence="3">
    <location>
        <begin position="35"/>
        <end position="46"/>
    </location>
</feature>
<feature type="helix" evidence="3">
    <location>
        <begin position="53"/>
        <end position="69"/>
    </location>
</feature>
<feature type="helix" evidence="3">
    <location>
        <begin position="77"/>
        <end position="87"/>
    </location>
</feature>
<feature type="helix" evidence="3">
    <location>
        <begin position="92"/>
        <end position="113"/>
    </location>
</feature>
<feature type="helix" evidence="3">
    <location>
        <begin position="117"/>
        <end position="124"/>
    </location>
</feature>
<feature type="helix" evidence="3">
    <location>
        <begin position="129"/>
        <end position="136"/>
    </location>
</feature>
<feature type="helix" evidence="3">
    <location>
        <begin position="141"/>
        <end position="149"/>
    </location>
</feature>
<feature type="helix" evidence="3">
    <location>
        <begin position="153"/>
        <end position="165"/>
    </location>
</feature>
<feature type="helix" evidence="3">
    <location>
        <begin position="171"/>
        <end position="192"/>
    </location>
</feature>
<feature type="helix" evidence="3">
    <location>
        <begin position="198"/>
        <end position="208"/>
    </location>
</feature>
<feature type="helix" evidence="3">
    <location>
        <begin position="211"/>
        <end position="224"/>
    </location>
</feature>
<feature type="helix" evidence="3">
    <location>
        <begin position="226"/>
        <end position="236"/>
    </location>
</feature>
<feature type="helix" evidence="3">
    <location>
        <begin position="239"/>
        <end position="244"/>
    </location>
</feature>
<feature type="helix" evidence="3">
    <location>
        <begin position="247"/>
        <end position="254"/>
    </location>
</feature>
<feature type="helix" evidence="3">
    <location>
        <begin position="259"/>
        <end position="267"/>
    </location>
</feature>
<feature type="helix" evidence="3">
    <location>
        <begin position="271"/>
        <end position="278"/>
    </location>
</feature>
<feature type="helix" evidence="3">
    <location>
        <begin position="283"/>
        <end position="295"/>
    </location>
</feature>
<feature type="helix" evidence="3">
    <location>
        <begin position="301"/>
        <end position="319"/>
    </location>
</feature>
<feature type="strand" evidence="3">
    <location>
        <begin position="321"/>
        <end position="323"/>
    </location>
</feature>
<keyword id="KW-0002">3D-structure</keyword>
<keyword id="KW-0975">Bacterial flagellum</keyword>
<keyword id="KW-0997">Cell inner membrane</keyword>
<keyword id="KW-1003">Cell membrane</keyword>
<keyword id="KW-0145">Chemotaxis</keyword>
<keyword id="KW-0283">Flagellar rotation</keyword>
<keyword id="KW-0472">Membrane</keyword>
<keyword id="KW-1185">Reference proteome</keyword>
<gene>
    <name type="primary">fliG</name>
    <name type="ordered locus">aq_653</name>
</gene>